<gene>
    <name evidence="1" type="primary">ispF</name>
    <name type="ordered locus">ABSDF1672</name>
</gene>
<name>ISPF_ACIBS</name>
<reference key="1">
    <citation type="journal article" date="2008" name="PLoS ONE">
        <title>Comparative analysis of Acinetobacters: three genomes for three lifestyles.</title>
        <authorList>
            <person name="Vallenet D."/>
            <person name="Nordmann P."/>
            <person name="Barbe V."/>
            <person name="Poirel L."/>
            <person name="Mangenot S."/>
            <person name="Bataille E."/>
            <person name="Dossat C."/>
            <person name="Gas S."/>
            <person name="Kreimeyer A."/>
            <person name="Lenoble P."/>
            <person name="Oztas S."/>
            <person name="Poulain J."/>
            <person name="Segurens B."/>
            <person name="Robert C."/>
            <person name="Abergel C."/>
            <person name="Claverie J.-M."/>
            <person name="Raoult D."/>
            <person name="Medigue C."/>
            <person name="Weissenbach J."/>
            <person name="Cruveiller S."/>
        </authorList>
    </citation>
    <scope>NUCLEOTIDE SEQUENCE [LARGE SCALE GENOMIC DNA]</scope>
    <source>
        <strain>SDF</strain>
    </source>
</reference>
<dbReference type="EC" id="4.6.1.12" evidence="1"/>
<dbReference type="EMBL" id="CU468230">
    <property type="protein sequence ID" value="CAP01012.1"/>
    <property type="molecule type" value="Genomic_DNA"/>
</dbReference>
<dbReference type="SMR" id="B0VMT6"/>
<dbReference type="KEGG" id="abm:ABSDF1672"/>
<dbReference type="HOGENOM" id="CLU_084630_2_0_6"/>
<dbReference type="UniPathway" id="UPA00056">
    <property type="reaction ID" value="UER00095"/>
</dbReference>
<dbReference type="Proteomes" id="UP000001741">
    <property type="component" value="Chromosome"/>
</dbReference>
<dbReference type="GO" id="GO:0008685">
    <property type="term" value="F:2-C-methyl-D-erythritol 2,4-cyclodiphosphate synthase activity"/>
    <property type="evidence" value="ECO:0007669"/>
    <property type="project" value="UniProtKB-UniRule"/>
</dbReference>
<dbReference type="GO" id="GO:0046872">
    <property type="term" value="F:metal ion binding"/>
    <property type="evidence" value="ECO:0007669"/>
    <property type="project" value="UniProtKB-KW"/>
</dbReference>
<dbReference type="GO" id="GO:0019288">
    <property type="term" value="P:isopentenyl diphosphate biosynthetic process, methylerythritol 4-phosphate pathway"/>
    <property type="evidence" value="ECO:0007669"/>
    <property type="project" value="UniProtKB-UniRule"/>
</dbReference>
<dbReference type="GO" id="GO:0016114">
    <property type="term" value="P:terpenoid biosynthetic process"/>
    <property type="evidence" value="ECO:0007669"/>
    <property type="project" value="InterPro"/>
</dbReference>
<dbReference type="CDD" id="cd00554">
    <property type="entry name" value="MECDP_synthase"/>
    <property type="match status" value="1"/>
</dbReference>
<dbReference type="FunFam" id="3.30.1330.50:FF:000001">
    <property type="entry name" value="2-C-methyl-D-erythritol 2,4-cyclodiphosphate synthase"/>
    <property type="match status" value="1"/>
</dbReference>
<dbReference type="Gene3D" id="3.30.1330.50">
    <property type="entry name" value="2-C-methyl-D-erythritol 2,4-cyclodiphosphate synthase"/>
    <property type="match status" value="1"/>
</dbReference>
<dbReference type="HAMAP" id="MF_00107">
    <property type="entry name" value="IspF"/>
    <property type="match status" value="1"/>
</dbReference>
<dbReference type="InterPro" id="IPR003526">
    <property type="entry name" value="MECDP_synthase"/>
</dbReference>
<dbReference type="InterPro" id="IPR020555">
    <property type="entry name" value="MECDP_synthase_CS"/>
</dbReference>
<dbReference type="InterPro" id="IPR036571">
    <property type="entry name" value="MECDP_synthase_sf"/>
</dbReference>
<dbReference type="NCBIfam" id="TIGR00151">
    <property type="entry name" value="ispF"/>
    <property type="match status" value="1"/>
</dbReference>
<dbReference type="PANTHER" id="PTHR43181">
    <property type="entry name" value="2-C-METHYL-D-ERYTHRITOL 2,4-CYCLODIPHOSPHATE SYNTHASE, CHLOROPLASTIC"/>
    <property type="match status" value="1"/>
</dbReference>
<dbReference type="PANTHER" id="PTHR43181:SF1">
    <property type="entry name" value="2-C-METHYL-D-ERYTHRITOL 2,4-CYCLODIPHOSPHATE SYNTHASE, CHLOROPLASTIC"/>
    <property type="match status" value="1"/>
</dbReference>
<dbReference type="Pfam" id="PF02542">
    <property type="entry name" value="YgbB"/>
    <property type="match status" value="1"/>
</dbReference>
<dbReference type="SUPFAM" id="SSF69765">
    <property type="entry name" value="IpsF-like"/>
    <property type="match status" value="1"/>
</dbReference>
<dbReference type="PROSITE" id="PS01350">
    <property type="entry name" value="ISPF"/>
    <property type="match status" value="1"/>
</dbReference>
<feature type="chain" id="PRO_1000094233" description="2-C-methyl-D-erythritol 2,4-cyclodiphosphate synthase">
    <location>
        <begin position="1"/>
        <end position="160"/>
    </location>
</feature>
<feature type="binding site" evidence="1">
    <location>
        <begin position="12"/>
        <end position="14"/>
    </location>
    <ligand>
        <name>4-CDP-2-C-methyl-D-erythritol 2-phosphate</name>
        <dbReference type="ChEBI" id="CHEBI:57919"/>
    </ligand>
</feature>
<feature type="binding site" evidence="1">
    <location>
        <position position="12"/>
    </location>
    <ligand>
        <name>a divalent metal cation</name>
        <dbReference type="ChEBI" id="CHEBI:60240"/>
    </ligand>
</feature>
<feature type="binding site" evidence="1">
    <location>
        <position position="14"/>
    </location>
    <ligand>
        <name>a divalent metal cation</name>
        <dbReference type="ChEBI" id="CHEBI:60240"/>
    </ligand>
</feature>
<feature type="binding site" evidence="1">
    <location>
        <begin position="38"/>
        <end position="39"/>
    </location>
    <ligand>
        <name>4-CDP-2-C-methyl-D-erythritol 2-phosphate</name>
        <dbReference type="ChEBI" id="CHEBI:57919"/>
    </ligand>
</feature>
<feature type="binding site" evidence="1">
    <location>
        <position position="46"/>
    </location>
    <ligand>
        <name>a divalent metal cation</name>
        <dbReference type="ChEBI" id="CHEBI:60240"/>
    </ligand>
</feature>
<feature type="binding site" evidence="1">
    <location>
        <begin position="60"/>
        <end position="62"/>
    </location>
    <ligand>
        <name>4-CDP-2-C-methyl-D-erythritol 2-phosphate</name>
        <dbReference type="ChEBI" id="CHEBI:57919"/>
    </ligand>
</feature>
<feature type="binding site" evidence="1">
    <location>
        <begin position="65"/>
        <end position="69"/>
    </location>
    <ligand>
        <name>4-CDP-2-C-methyl-D-erythritol 2-phosphate</name>
        <dbReference type="ChEBI" id="CHEBI:57919"/>
    </ligand>
</feature>
<feature type="binding site" evidence="1">
    <location>
        <begin position="136"/>
        <end position="139"/>
    </location>
    <ligand>
        <name>4-CDP-2-C-methyl-D-erythritol 2-phosphate</name>
        <dbReference type="ChEBI" id="CHEBI:57919"/>
    </ligand>
</feature>
<feature type="binding site" evidence="1">
    <location>
        <position position="143"/>
    </location>
    <ligand>
        <name>4-CDP-2-C-methyl-D-erythritol 2-phosphate</name>
        <dbReference type="ChEBI" id="CHEBI:57919"/>
    </ligand>
</feature>
<feature type="binding site" evidence="1">
    <location>
        <position position="146"/>
    </location>
    <ligand>
        <name>4-CDP-2-C-methyl-D-erythritol 2-phosphate</name>
        <dbReference type="ChEBI" id="CHEBI:57919"/>
    </ligand>
</feature>
<feature type="site" description="Transition state stabilizer" evidence="1">
    <location>
        <position position="38"/>
    </location>
</feature>
<feature type="site" description="Transition state stabilizer" evidence="1">
    <location>
        <position position="137"/>
    </location>
</feature>
<keyword id="KW-0414">Isoprene biosynthesis</keyword>
<keyword id="KW-0456">Lyase</keyword>
<keyword id="KW-0479">Metal-binding</keyword>
<organism>
    <name type="scientific">Acinetobacter baumannii (strain SDF)</name>
    <dbReference type="NCBI Taxonomy" id="509170"/>
    <lineage>
        <taxon>Bacteria</taxon>
        <taxon>Pseudomonadati</taxon>
        <taxon>Pseudomonadota</taxon>
        <taxon>Gammaproteobacteria</taxon>
        <taxon>Moraxellales</taxon>
        <taxon>Moraxellaceae</taxon>
        <taxon>Acinetobacter</taxon>
        <taxon>Acinetobacter calcoaceticus/baumannii complex</taxon>
    </lineage>
</organism>
<sequence>MVAQIRIGQGMDVHAFEEGKFVTLAGVQIPHTHGLKAHSDGDVVLHALCDALLGALALGDIGQHFPDTDPEFKGADSRVLLKHVYQLILDRGYHLNNADITVACERPKLAKYNLEMRQSIADVLNVDLNQISIKATTTEKLGFTGRQEGILATATVLISH</sequence>
<comment type="function">
    <text evidence="1">Involved in the biosynthesis of isopentenyl diphosphate (IPP) and dimethylallyl diphosphate (DMAPP), two major building blocks of isoprenoid compounds. Catalyzes the conversion of 4-diphosphocytidyl-2-C-methyl-D-erythritol 2-phosphate (CDP-ME2P) to 2-C-methyl-D-erythritol 2,4-cyclodiphosphate (ME-CPP) with a corresponding release of cytidine 5-monophosphate (CMP).</text>
</comment>
<comment type="catalytic activity">
    <reaction evidence="1">
        <text>4-CDP-2-C-methyl-D-erythritol 2-phosphate = 2-C-methyl-D-erythritol 2,4-cyclic diphosphate + CMP</text>
        <dbReference type="Rhea" id="RHEA:23864"/>
        <dbReference type="ChEBI" id="CHEBI:57919"/>
        <dbReference type="ChEBI" id="CHEBI:58483"/>
        <dbReference type="ChEBI" id="CHEBI:60377"/>
        <dbReference type="EC" id="4.6.1.12"/>
    </reaction>
</comment>
<comment type="cofactor">
    <cofactor evidence="1">
        <name>a divalent metal cation</name>
        <dbReference type="ChEBI" id="CHEBI:60240"/>
    </cofactor>
    <text evidence="1">Binds 1 divalent metal cation per subunit.</text>
</comment>
<comment type="pathway">
    <text evidence="1">Isoprenoid biosynthesis; isopentenyl diphosphate biosynthesis via DXP pathway; isopentenyl diphosphate from 1-deoxy-D-xylulose 5-phosphate: step 4/6.</text>
</comment>
<comment type="subunit">
    <text evidence="1">Homotrimer.</text>
</comment>
<comment type="similarity">
    <text evidence="1">Belongs to the IspF family.</text>
</comment>
<accession>B0VMT6</accession>
<proteinExistence type="inferred from homology"/>
<protein>
    <recommendedName>
        <fullName evidence="1">2-C-methyl-D-erythritol 2,4-cyclodiphosphate synthase</fullName>
        <shortName evidence="1">MECDP-synthase</shortName>
        <shortName evidence="1">MECPP-synthase</shortName>
        <shortName evidence="1">MECPS</shortName>
        <ecNumber evidence="1">4.6.1.12</ecNumber>
    </recommendedName>
</protein>
<evidence type="ECO:0000255" key="1">
    <source>
        <dbReference type="HAMAP-Rule" id="MF_00107"/>
    </source>
</evidence>